<organism>
    <name type="scientific">Mesorhizobium japonicum (strain LMG 29417 / CECT 9101 / MAFF 303099)</name>
    <name type="common">Mesorhizobium loti (strain MAFF 303099)</name>
    <dbReference type="NCBI Taxonomy" id="266835"/>
    <lineage>
        <taxon>Bacteria</taxon>
        <taxon>Pseudomonadati</taxon>
        <taxon>Pseudomonadota</taxon>
        <taxon>Alphaproteobacteria</taxon>
        <taxon>Hyphomicrobiales</taxon>
        <taxon>Phyllobacteriaceae</taxon>
        <taxon>Mesorhizobium</taxon>
    </lineage>
</organism>
<sequence>MGGKTLTRADLAEAVYRKVGLSRTESAELVEAVLDEICEAIVRGETVKLSSFATFHVRSKNERIGRNPKTGEEVPILPRRVMTFKSSNVLKNRILRSHQNSKAKGGK</sequence>
<reference key="1">
    <citation type="journal article" date="2000" name="DNA Res.">
        <title>Complete genome structure of the nitrogen-fixing symbiotic bacterium Mesorhizobium loti.</title>
        <authorList>
            <person name="Kaneko T."/>
            <person name="Nakamura Y."/>
            <person name="Sato S."/>
            <person name="Asamizu E."/>
            <person name="Kato T."/>
            <person name="Sasamoto S."/>
            <person name="Watanabe A."/>
            <person name="Idesawa K."/>
            <person name="Ishikawa A."/>
            <person name="Kawashima K."/>
            <person name="Kimura T."/>
            <person name="Kishida Y."/>
            <person name="Kiyokawa C."/>
            <person name="Kohara M."/>
            <person name="Matsumoto M."/>
            <person name="Matsuno A."/>
            <person name="Mochizuki Y."/>
            <person name="Nakayama S."/>
            <person name="Nakazaki N."/>
            <person name="Shimpo S."/>
            <person name="Sugimoto M."/>
            <person name="Takeuchi C."/>
            <person name="Yamada M."/>
            <person name="Tabata S."/>
        </authorList>
    </citation>
    <scope>NUCLEOTIDE SEQUENCE [LARGE SCALE GENOMIC DNA]</scope>
    <source>
        <strain>LMG 29417 / CECT 9101 / MAFF 303099</strain>
    </source>
</reference>
<evidence type="ECO:0000255" key="1">
    <source>
        <dbReference type="HAMAP-Rule" id="MF_00380"/>
    </source>
</evidence>
<keyword id="KW-0233">DNA recombination</keyword>
<keyword id="KW-0238">DNA-binding</keyword>
<keyword id="KW-0804">Transcription</keyword>
<keyword id="KW-0805">Transcription regulation</keyword>
<keyword id="KW-0810">Translation regulation</keyword>
<feature type="chain" id="PRO_0000105022" description="Integration host factor subunit alpha">
    <location>
        <begin position="1"/>
        <end position="107"/>
    </location>
</feature>
<proteinExistence type="inferred from homology"/>
<comment type="function">
    <text evidence="1">This protein is one of the two subunits of integration host factor, a specific DNA-binding protein that functions in genetic recombination as well as in transcriptional and translational control.</text>
</comment>
<comment type="subunit">
    <text evidence="1">Heterodimer of an alpha and a beta chain.</text>
</comment>
<comment type="similarity">
    <text evidence="1">Belongs to the bacterial histone-like protein family.</text>
</comment>
<accession>Q982Z7</accession>
<protein>
    <recommendedName>
        <fullName evidence="1">Integration host factor subunit alpha</fullName>
        <shortName evidence="1">IHF-alpha</shortName>
    </recommendedName>
</protein>
<dbReference type="EMBL" id="BA000012">
    <property type="protein sequence ID" value="BAB54309.1"/>
    <property type="molecule type" value="Genomic_DNA"/>
</dbReference>
<dbReference type="RefSeq" id="WP_010915609.1">
    <property type="nucleotide sequence ID" value="NC_002678.2"/>
</dbReference>
<dbReference type="SMR" id="Q982Z7"/>
<dbReference type="KEGG" id="mlo:mlr8425"/>
<dbReference type="eggNOG" id="COG0776">
    <property type="taxonomic scope" value="Bacteria"/>
</dbReference>
<dbReference type="HOGENOM" id="CLU_105066_1_1_5"/>
<dbReference type="Proteomes" id="UP000000552">
    <property type="component" value="Chromosome"/>
</dbReference>
<dbReference type="GO" id="GO:0005829">
    <property type="term" value="C:cytosol"/>
    <property type="evidence" value="ECO:0007669"/>
    <property type="project" value="TreeGrafter"/>
</dbReference>
<dbReference type="GO" id="GO:0003677">
    <property type="term" value="F:DNA binding"/>
    <property type="evidence" value="ECO:0007669"/>
    <property type="project" value="UniProtKB-UniRule"/>
</dbReference>
<dbReference type="GO" id="GO:0030527">
    <property type="term" value="F:structural constituent of chromatin"/>
    <property type="evidence" value="ECO:0007669"/>
    <property type="project" value="InterPro"/>
</dbReference>
<dbReference type="GO" id="GO:0006310">
    <property type="term" value="P:DNA recombination"/>
    <property type="evidence" value="ECO:0007669"/>
    <property type="project" value="UniProtKB-UniRule"/>
</dbReference>
<dbReference type="GO" id="GO:0009893">
    <property type="term" value="P:positive regulation of metabolic process"/>
    <property type="evidence" value="ECO:0007669"/>
    <property type="project" value="UniProtKB-ARBA"/>
</dbReference>
<dbReference type="GO" id="GO:0006355">
    <property type="term" value="P:regulation of DNA-templated transcription"/>
    <property type="evidence" value="ECO:0007669"/>
    <property type="project" value="UniProtKB-UniRule"/>
</dbReference>
<dbReference type="GO" id="GO:0006417">
    <property type="term" value="P:regulation of translation"/>
    <property type="evidence" value="ECO:0007669"/>
    <property type="project" value="UniProtKB-UniRule"/>
</dbReference>
<dbReference type="CDD" id="cd13835">
    <property type="entry name" value="IHF_A"/>
    <property type="match status" value="1"/>
</dbReference>
<dbReference type="Gene3D" id="4.10.520.10">
    <property type="entry name" value="IHF-like DNA-binding proteins"/>
    <property type="match status" value="1"/>
</dbReference>
<dbReference type="HAMAP" id="MF_00380">
    <property type="entry name" value="IHF_alpha"/>
    <property type="match status" value="1"/>
</dbReference>
<dbReference type="InterPro" id="IPR000119">
    <property type="entry name" value="Hist_DNA-bd"/>
</dbReference>
<dbReference type="InterPro" id="IPR020816">
    <property type="entry name" value="Histone-like_DNA-bd_CS"/>
</dbReference>
<dbReference type="InterPro" id="IPR010992">
    <property type="entry name" value="IHF-like_DNA-bd_dom_sf"/>
</dbReference>
<dbReference type="InterPro" id="IPR005684">
    <property type="entry name" value="IHF_alpha"/>
</dbReference>
<dbReference type="NCBIfam" id="TIGR00987">
    <property type="entry name" value="himA"/>
    <property type="match status" value="1"/>
</dbReference>
<dbReference type="NCBIfam" id="NF001401">
    <property type="entry name" value="PRK00285.1"/>
    <property type="match status" value="1"/>
</dbReference>
<dbReference type="PANTHER" id="PTHR33175">
    <property type="entry name" value="DNA-BINDING PROTEIN HU"/>
    <property type="match status" value="1"/>
</dbReference>
<dbReference type="PANTHER" id="PTHR33175:SF2">
    <property type="entry name" value="INTEGRATION HOST FACTOR SUBUNIT ALPHA"/>
    <property type="match status" value="1"/>
</dbReference>
<dbReference type="Pfam" id="PF00216">
    <property type="entry name" value="Bac_DNA_binding"/>
    <property type="match status" value="1"/>
</dbReference>
<dbReference type="PRINTS" id="PR01727">
    <property type="entry name" value="DNABINDINGHU"/>
</dbReference>
<dbReference type="SMART" id="SM00411">
    <property type="entry name" value="BHL"/>
    <property type="match status" value="1"/>
</dbReference>
<dbReference type="SUPFAM" id="SSF47729">
    <property type="entry name" value="IHF-like DNA-binding proteins"/>
    <property type="match status" value="1"/>
</dbReference>
<dbReference type="PROSITE" id="PS00045">
    <property type="entry name" value="HISTONE_LIKE"/>
    <property type="match status" value="1"/>
</dbReference>
<name>IHFA_RHILO</name>
<gene>
    <name evidence="1" type="primary">ihfA</name>
    <name evidence="1" type="synonym">himA</name>
    <name type="ordered locus">mlr8425</name>
</gene>